<dbReference type="EC" id="2.1.2.9" evidence="1"/>
<dbReference type="EMBL" id="AE001363">
    <property type="protein sequence ID" value="AAD18788.1"/>
    <property type="molecule type" value="Genomic_DNA"/>
</dbReference>
<dbReference type="EMBL" id="AE002161">
    <property type="protein sequence ID" value="AAF37982.1"/>
    <property type="molecule type" value="Genomic_DNA"/>
</dbReference>
<dbReference type="EMBL" id="BA000008">
    <property type="protein sequence ID" value="BAA98856.1"/>
    <property type="molecule type" value="Genomic_DNA"/>
</dbReference>
<dbReference type="EMBL" id="AE009440">
    <property type="protein sequence ID" value="AAP98604.1"/>
    <property type="molecule type" value="Genomic_DNA"/>
</dbReference>
<dbReference type="PIR" id="B72051">
    <property type="entry name" value="B72051"/>
</dbReference>
<dbReference type="PIR" id="F81615">
    <property type="entry name" value="F81615"/>
</dbReference>
<dbReference type="PIR" id="F86571">
    <property type="entry name" value="F86571"/>
</dbReference>
<dbReference type="RefSeq" id="NP_224845.1">
    <property type="nucleotide sequence ID" value="NC_000922.1"/>
</dbReference>
<dbReference type="RefSeq" id="WP_010883287.1">
    <property type="nucleotide sequence ID" value="NZ_LN847257.1"/>
</dbReference>
<dbReference type="SMR" id="Q9Z7Q5"/>
<dbReference type="STRING" id="406984.CPK_ORF00049"/>
<dbReference type="GeneID" id="45050699"/>
<dbReference type="KEGG" id="cpa:CP_0098"/>
<dbReference type="KEGG" id="cpj:fmt"/>
<dbReference type="KEGG" id="cpn:CPn_0649"/>
<dbReference type="KEGG" id="cpt:CpB0675"/>
<dbReference type="PATRIC" id="fig|115713.3.peg.719"/>
<dbReference type="eggNOG" id="COG0223">
    <property type="taxonomic scope" value="Bacteria"/>
</dbReference>
<dbReference type="HOGENOM" id="CLU_033347_1_1_0"/>
<dbReference type="OrthoDB" id="9802815at2"/>
<dbReference type="Proteomes" id="UP000000583">
    <property type="component" value="Chromosome"/>
</dbReference>
<dbReference type="Proteomes" id="UP000000801">
    <property type="component" value="Chromosome"/>
</dbReference>
<dbReference type="GO" id="GO:0005829">
    <property type="term" value="C:cytosol"/>
    <property type="evidence" value="ECO:0007669"/>
    <property type="project" value="TreeGrafter"/>
</dbReference>
<dbReference type="GO" id="GO:0004479">
    <property type="term" value="F:methionyl-tRNA formyltransferase activity"/>
    <property type="evidence" value="ECO:0007669"/>
    <property type="project" value="UniProtKB-UniRule"/>
</dbReference>
<dbReference type="CDD" id="cd08646">
    <property type="entry name" value="FMT_core_Met-tRNA-FMT_N"/>
    <property type="match status" value="1"/>
</dbReference>
<dbReference type="CDD" id="cd08704">
    <property type="entry name" value="Met_tRNA_FMT_C"/>
    <property type="match status" value="1"/>
</dbReference>
<dbReference type="Gene3D" id="3.40.50.12230">
    <property type="match status" value="1"/>
</dbReference>
<dbReference type="HAMAP" id="MF_00182">
    <property type="entry name" value="Formyl_trans"/>
    <property type="match status" value="1"/>
</dbReference>
<dbReference type="InterPro" id="IPR005794">
    <property type="entry name" value="Fmt"/>
</dbReference>
<dbReference type="InterPro" id="IPR005793">
    <property type="entry name" value="Formyl_trans_C"/>
</dbReference>
<dbReference type="InterPro" id="IPR002376">
    <property type="entry name" value="Formyl_transf_N"/>
</dbReference>
<dbReference type="InterPro" id="IPR036477">
    <property type="entry name" value="Formyl_transf_N_sf"/>
</dbReference>
<dbReference type="InterPro" id="IPR011034">
    <property type="entry name" value="Formyl_transferase-like_C_sf"/>
</dbReference>
<dbReference type="InterPro" id="IPR001555">
    <property type="entry name" value="GART_AS"/>
</dbReference>
<dbReference type="InterPro" id="IPR044135">
    <property type="entry name" value="Met-tRNA-FMT_C"/>
</dbReference>
<dbReference type="InterPro" id="IPR041711">
    <property type="entry name" value="Met-tRNA-FMT_N"/>
</dbReference>
<dbReference type="NCBIfam" id="TIGR00460">
    <property type="entry name" value="fmt"/>
    <property type="match status" value="1"/>
</dbReference>
<dbReference type="PANTHER" id="PTHR11138">
    <property type="entry name" value="METHIONYL-TRNA FORMYLTRANSFERASE"/>
    <property type="match status" value="1"/>
</dbReference>
<dbReference type="PANTHER" id="PTHR11138:SF5">
    <property type="entry name" value="METHIONYL-TRNA FORMYLTRANSFERASE, MITOCHONDRIAL"/>
    <property type="match status" value="1"/>
</dbReference>
<dbReference type="Pfam" id="PF02911">
    <property type="entry name" value="Formyl_trans_C"/>
    <property type="match status" value="1"/>
</dbReference>
<dbReference type="Pfam" id="PF00551">
    <property type="entry name" value="Formyl_trans_N"/>
    <property type="match status" value="1"/>
</dbReference>
<dbReference type="SUPFAM" id="SSF50486">
    <property type="entry name" value="FMT C-terminal domain-like"/>
    <property type="match status" value="1"/>
</dbReference>
<dbReference type="SUPFAM" id="SSF53328">
    <property type="entry name" value="Formyltransferase"/>
    <property type="match status" value="1"/>
</dbReference>
<dbReference type="PROSITE" id="PS00373">
    <property type="entry name" value="GART"/>
    <property type="match status" value="1"/>
</dbReference>
<reference key="1">
    <citation type="journal article" date="1999" name="Nat. Genet.">
        <title>Comparative genomes of Chlamydia pneumoniae and C. trachomatis.</title>
        <authorList>
            <person name="Kalman S."/>
            <person name="Mitchell W.P."/>
            <person name="Marathe R."/>
            <person name="Lammel C.J."/>
            <person name="Fan J."/>
            <person name="Hyman R.W."/>
            <person name="Olinger L."/>
            <person name="Grimwood J."/>
            <person name="Davis R.W."/>
            <person name="Stephens R.S."/>
        </authorList>
    </citation>
    <scope>NUCLEOTIDE SEQUENCE [LARGE SCALE GENOMIC DNA]</scope>
    <source>
        <strain>CWL029</strain>
    </source>
</reference>
<reference key="2">
    <citation type="journal article" date="2000" name="Nucleic Acids Res.">
        <title>Genome sequences of Chlamydia trachomatis MoPn and Chlamydia pneumoniae AR39.</title>
        <authorList>
            <person name="Read T.D."/>
            <person name="Brunham R.C."/>
            <person name="Shen C."/>
            <person name="Gill S.R."/>
            <person name="Heidelberg J.F."/>
            <person name="White O."/>
            <person name="Hickey E.K."/>
            <person name="Peterson J.D."/>
            <person name="Utterback T.R."/>
            <person name="Berry K.J."/>
            <person name="Bass S."/>
            <person name="Linher K.D."/>
            <person name="Weidman J.F."/>
            <person name="Khouri H.M."/>
            <person name="Craven B."/>
            <person name="Bowman C."/>
            <person name="Dodson R.J."/>
            <person name="Gwinn M.L."/>
            <person name="Nelson W.C."/>
            <person name="DeBoy R.T."/>
            <person name="Kolonay J.F."/>
            <person name="McClarty G."/>
            <person name="Salzberg S.L."/>
            <person name="Eisen J.A."/>
            <person name="Fraser C.M."/>
        </authorList>
    </citation>
    <scope>NUCLEOTIDE SEQUENCE [LARGE SCALE GENOMIC DNA]</scope>
    <source>
        <strain>AR39</strain>
    </source>
</reference>
<reference key="3">
    <citation type="journal article" date="2000" name="Nucleic Acids Res.">
        <title>Comparison of whole genome sequences of Chlamydia pneumoniae J138 from Japan and CWL029 from USA.</title>
        <authorList>
            <person name="Shirai M."/>
            <person name="Hirakawa H."/>
            <person name="Kimoto M."/>
            <person name="Tabuchi M."/>
            <person name="Kishi F."/>
            <person name="Ouchi K."/>
            <person name="Shiba T."/>
            <person name="Ishii K."/>
            <person name="Hattori M."/>
            <person name="Kuhara S."/>
            <person name="Nakazawa T."/>
        </authorList>
    </citation>
    <scope>NUCLEOTIDE SEQUENCE [LARGE SCALE GENOMIC DNA]</scope>
    <source>
        <strain>J138</strain>
    </source>
</reference>
<reference key="4">
    <citation type="submission" date="2002-05" db="EMBL/GenBank/DDBJ databases">
        <title>The genome sequence of Chlamydia pneumoniae TW183 and comparison with other Chlamydia strains based on whole genome sequence analysis.</title>
        <authorList>
            <person name="Geng M.M."/>
            <person name="Schuhmacher A."/>
            <person name="Muehldorfer I."/>
            <person name="Bensch K.W."/>
            <person name="Schaefer K.P."/>
            <person name="Schneider S."/>
            <person name="Pohl T."/>
            <person name="Essig A."/>
            <person name="Marre R."/>
            <person name="Melchers K."/>
        </authorList>
    </citation>
    <scope>NUCLEOTIDE SEQUENCE [LARGE SCALE GENOMIC DNA]</scope>
    <source>
        <strain>TW-183</strain>
    </source>
</reference>
<gene>
    <name evidence="1" type="primary">fmt</name>
    <name type="ordered locus">CPn_0649</name>
    <name type="ordered locus">CP_0098</name>
    <name type="ordered locus">CpB0675</name>
</gene>
<proteinExistence type="inferred from homology"/>
<keyword id="KW-0648">Protein biosynthesis</keyword>
<keyword id="KW-0808">Transferase</keyword>
<comment type="function">
    <text evidence="1">Attaches a formyl group to the free amino group of methionyl-tRNA(fMet). The formyl group appears to play a dual role in the initiator identity of N-formylmethionyl-tRNA by promoting its recognition by IF2 and preventing the misappropriation of this tRNA by the elongation apparatus.</text>
</comment>
<comment type="catalytic activity">
    <reaction evidence="1">
        <text>L-methionyl-tRNA(fMet) + (6R)-10-formyltetrahydrofolate = N-formyl-L-methionyl-tRNA(fMet) + (6S)-5,6,7,8-tetrahydrofolate + H(+)</text>
        <dbReference type="Rhea" id="RHEA:24380"/>
        <dbReference type="Rhea" id="RHEA-COMP:9952"/>
        <dbReference type="Rhea" id="RHEA-COMP:9953"/>
        <dbReference type="ChEBI" id="CHEBI:15378"/>
        <dbReference type="ChEBI" id="CHEBI:57453"/>
        <dbReference type="ChEBI" id="CHEBI:78530"/>
        <dbReference type="ChEBI" id="CHEBI:78844"/>
        <dbReference type="ChEBI" id="CHEBI:195366"/>
        <dbReference type="EC" id="2.1.2.9"/>
    </reaction>
</comment>
<comment type="similarity">
    <text evidence="1 2">Belongs to the Fmt family.</text>
</comment>
<name>FMT_CHLPN</name>
<feature type="chain" id="PRO_0000082945" description="Methionyl-tRNA formyltransferase">
    <location>
        <begin position="1"/>
        <end position="321"/>
    </location>
</feature>
<feature type="binding site" evidence="1">
    <location>
        <begin position="111"/>
        <end position="114"/>
    </location>
    <ligand>
        <name>(6S)-5,6,7,8-tetrahydrofolate</name>
        <dbReference type="ChEBI" id="CHEBI:57453"/>
    </ligand>
</feature>
<feature type="sequence conflict" description="In Ref. 2; AAF37982." evidence="2" ref="2">
    <original>I</original>
    <variation>V</variation>
    <location>
        <position position="279"/>
    </location>
</feature>
<organism>
    <name type="scientific">Chlamydia pneumoniae</name>
    <name type="common">Chlamydophila pneumoniae</name>
    <dbReference type="NCBI Taxonomy" id="83558"/>
    <lineage>
        <taxon>Bacteria</taxon>
        <taxon>Pseudomonadati</taxon>
        <taxon>Chlamydiota</taxon>
        <taxon>Chlamydiia</taxon>
        <taxon>Chlamydiales</taxon>
        <taxon>Chlamydiaceae</taxon>
        <taxon>Chlamydia/Chlamydophila group</taxon>
        <taxon>Chlamydia</taxon>
    </lineage>
</organism>
<evidence type="ECO:0000255" key="1">
    <source>
        <dbReference type="HAMAP-Rule" id="MF_00182"/>
    </source>
</evidence>
<evidence type="ECO:0000305" key="2"/>
<protein>
    <recommendedName>
        <fullName evidence="1">Methionyl-tRNA formyltransferase</fullName>
        <ecNumber evidence="1">2.1.2.9</ecNumber>
    </recommendedName>
</protein>
<sequence>MNLKVVYFGTPTFAATVLQDLLHHKIQITAVVTRVDKPQKRSAQLIPSPVKTIALTHGLPLLQPSKASDPQFIEELRAFNADVFIVVAYGAILRQIVLDIPRYGCYNLHAGLLPAYRGAAPIQRCIMEGATESGNTVIRMDAGMDTGDMANITRVPIGPDMTSGELADALASQGAEVLIKTLQQIESGQLQLVSQDAALATIAPKLSKEEGQVPWDKPAKEAYAHIRGVTPAPGAWTLFSFSEKAPKRLMIRKASLLAEAGRYGAPGTVVVTDRQELAIACSEGAICLHEVQVEGKGSTNSKSFLNGYPAKKLKIVFTLNN</sequence>
<accession>Q9Z7Q5</accession>
<accession>Q9JQG3</accession>
<accession>Q9K2D9</accession>